<accession>A2SDN1</accession>
<name>PYRB_METPP</name>
<reference key="1">
    <citation type="journal article" date="2007" name="J. Bacteriol.">
        <title>Whole-genome analysis of the methyl tert-butyl ether-degrading beta-proteobacterium Methylibium petroleiphilum PM1.</title>
        <authorList>
            <person name="Kane S.R."/>
            <person name="Chakicherla A.Y."/>
            <person name="Chain P.S.G."/>
            <person name="Schmidt R."/>
            <person name="Shin M.W."/>
            <person name="Legler T.C."/>
            <person name="Scow K.M."/>
            <person name="Larimer F.W."/>
            <person name="Lucas S.M."/>
            <person name="Richardson P.M."/>
            <person name="Hristova K.R."/>
        </authorList>
    </citation>
    <scope>NUCLEOTIDE SEQUENCE [LARGE SCALE GENOMIC DNA]</scope>
    <source>
        <strain>ATCC BAA-1232 / LMG 22953 / PM1</strain>
    </source>
</reference>
<evidence type="ECO:0000255" key="1">
    <source>
        <dbReference type="HAMAP-Rule" id="MF_00001"/>
    </source>
</evidence>
<sequence length="320" mass="34759">MLNKRNPQLNAHGELIHLLSIEGLPKAVLTQILDTAGTFLSVNDREVKKVPLLRGKSVFNLFFENSTRTRTTFEIAAKRLSADVINLDIARSSTAKGESLLDTIANLSAMHADMFVVRHAESGAPYLIAQHVAPHVHVVNAGDGRHAHPTQGLLDMYTIRHYKKDFSNLVVAIVGDIVHSRVARSDIHALTTLGAAEVRAVGPRTLVPADLKHMGVRVCHDMSEGIRDADVIIMLRLQNERMSGALLPSAGEYFKSFGLTEEKLALARPDAIVMHPGPINRGVEIDSSVVDGRQSVILPQVTFGIAVRMAVMSTIAGNNA</sequence>
<comment type="function">
    <text evidence="1">Catalyzes the condensation of carbamoyl phosphate and aspartate to form carbamoyl aspartate and inorganic phosphate, the committed step in the de novo pyrimidine nucleotide biosynthesis pathway.</text>
</comment>
<comment type="catalytic activity">
    <reaction evidence="1">
        <text>carbamoyl phosphate + L-aspartate = N-carbamoyl-L-aspartate + phosphate + H(+)</text>
        <dbReference type="Rhea" id="RHEA:20013"/>
        <dbReference type="ChEBI" id="CHEBI:15378"/>
        <dbReference type="ChEBI" id="CHEBI:29991"/>
        <dbReference type="ChEBI" id="CHEBI:32814"/>
        <dbReference type="ChEBI" id="CHEBI:43474"/>
        <dbReference type="ChEBI" id="CHEBI:58228"/>
        <dbReference type="EC" id="2.1.3.2"/>
    </reaction>
</comment>
<comment type="pathway">
    <text evidence="1">Pyrimidine metabolism; UMP biosynthesis via de novo pathway; (S)-dihydroorotate from bicarbonate: step 2/3.</text>
</comment>
<comment type="subunit">
    <text evidence="1">Heterododecamer (2C3:3R2) of six catalytic PyrB chains organized as two trimers (C3), and six regulatory PyrI chains organized as three dimers (R2).</text>
</comment>
<comment type="similarity">
    <text evidence="1">Belongs to the aspartate/ornithine carbamoyltransferase superfamily. ATCase family.</text>
</comment>
<dbReference type="EC" id="2.1.3.2" evidence="1"/>
<dbReference type="EMBL" id="CP000555">
    <property type="protein sequence ID" value="ABM93670.1"/>
    <property type="molecule type" value="Genomic_DNA"/>
</dbReference>
<dbReference type="RefSeq" id="WP_011828308.1">
    <property type="nucleotide sequence ID" value="NC_008825.1"/>
</dbReference>
<dbReference type="SMR" id="A2SDN1"/>
<dbReference type="STRING" id="420662.Mpe_A0708"/>
<dbReference type="KEGG" id="mpt:Mpe_A0708"/>
<dbReference type="eggNOG" id="COG0540">
    <property type="taxonomic scope" value="Bacteria"/>
</dbReference>
<dbReference type="HOGENOM" id="CLU_043846_2_0_4"/>
<dbReference type="UniPathway" id="UPA00070">
    <property type="reaction ID" value="UER00116"/>
</dbReference>
<dbReference type="Proteomes" id="UP000000366">
    <property type="component" value="Chromosome"/>
</dbReference>
<dbReference type="GO" id="GO:0005829">
    <property type="term" value="C:cytosol"/>
    <property type="evidence" value="ECO:0007669"/>
    <property type="project" value="TreeGrafter"/>
</dbReference>
<dbReference type="GO" id="GO:0016597">
    <property type="term" value="F:amino acid binding"/>
    <property type="evidence" value="ECO:0007669"/>
    <property type="project" value="InterPro"/>
</dbReference>
<dbReference type="GO" id="GO:0004070">
    <property type="term" value="F:aspartate carbamoyltransferase activity"/>
    <property type="evidence" value="ECO:0007669"/>
    <property type="project" value="UniProtKB-UniRule"/>
</dbReference>
<dbReference type="GO" id="GO:0006207">
    <property type="term" value="P:'de novo' pyrimidine nucleobase biosynthetic process"/>
    <property type="evidence" value="ECO:0007669"/>
    <property type="project" value="InterPro"/>
</dbReference>
<dbReference type="GO" id="GO:0044205">
    <property type="term" value="P:'de novo' UMP biosynthetic process"/>
    <property type="evidence" value="ECO:0007669"/>
    <property type="project" value="UniProtKB-UniRule"/>
</dbReference>
<dbReference type="GO" id="GO:0006520">
    <property type="term" value="P:amino acid metabolic process"/>
    <property type="evidence" value="ECO:0007669"/>
    <property type="project" value="InterPro"/>
</dbReference>
<dbReference type="FunFam" id="3.40.50.1370:FF:000007">
    <property type="entry name" value="Aspartate carbamoyltransferase"/>
    <property type="match status" value="1"/>
</dbReference>
<dbReference type="Gene3D" id="3.40.50.1370">
    <property type="entry name" value="Aspartate/ornithine carbamoyltransferase"/>
    <property type="match status" value="2"/>
</dbReference>
<dbReference type="HAMAP" id="MF_00001">
    <property type="entry name" value="Asp_carb_tr"/>
    <property type="match status" value="1"/>
</dbReference>
<dbReference type="InterPro" id="IPR006132">
    <property type="entry name" value="Asp/Orn_carbamoyltranf_P-bd"/>
</dbReference>
<dbReference type="InterPro" id="IPR006130">
    <property type="entry name" value="Asp/Orn_carbamoylTrfase"/>
</dbReference>
<dbReference type="InterPro" id="IPR036901">
    <property type="entry name" value="Asp/Orn_carbamoylTrfase_sf"/>
</dbReference>
<dbReference type="InterPro" id="IPR002082">
    <property type="entry name" value="Asp_carbamoyltransf"/>
</dbReference>
<dbReference type="InterPro" id="IPR006131">
    <property type="entry name" value="Asp_carbamoyltransf_Asp/Orn-bd"/>
</dbReference>
<dbReference type="NCBIfam" id="TIGR00670">
    <property type="entry name" value="asp_carb_tr"/>
    <property type="match status" value="1"/>
</dbReference>
<dbReference type="NCBIfam" id="NF002032">
    <property type="entry name" value="PRK00856.1"/>
    <property type="match status" value="1"/>
</dbReference>
<dbReference type="PANTHER" id="PTHR45753:SF6">
    <property type="entry name" value="ASPARTATE CARBAMOYLTRANSFERASE"/>
    <property type="match status" value="1"/>
</dbReference>
<dbReference type="PANTHER" id="PTHR45753">
    <property type="entry name" value="ORNITHINE CARBAMOYLTRANSFERASE, MITOCHONDRIAL"/>
    <property type="match status" value="1"/>
</dbReference>
<dbReference type="Pfam" id="PF00185">
    <property type="entry name" value="OTCace"/>
    <property type="match status" value="1"/>
</dbReference>
<dbReference type="Pfam" id="PF02729">
    <property type="entry name" value="OTCace_N"/>
    <property type="match status" value="1"/>
</dbReference>
<dbReference type="PRINTS" id="PR00100">
    <property type="entry name" value="AOTCASE"/>
</dbReference>
<dbReference type="PRINTS" id="PR00101">
    <property type="entry name" value="ATCASE"/>
</dbReference>
<dbReference type="SUPFAM" id="SSF53671">
    <property type="entry name" value="Aspartate/ornithine carbamoyltransferase"/>
    <property type="match status" value="1"/>
</dbReference>
<dbReference type="PROSITE" id="PS00097">
    <property type="entry name" value="CARBAMOYLTRANSFERASE"/>
    <property type="match status" value="1"/>
</dbReference>
<proteinExistence type="inferred from homology"/>
<gene>
    <name evidence="1" type="primary">pyrB</name>
    <name type="ordered locus">Mpe_A0708</name>
</gene>
<protein>
    <recommendedName>
        <fullName evidence="1">Aspartate carbamoyltransferase catalytic subunit</fullName>
        <ecNumber evidence="1">2.1.3.2</ecNumber>
    </recommendedName>
    <alternativeName>
        <fullName evidence="1">Aspartate transcarbamylase</fullName>
        <shortName evidence="1">ATCase</shortName>
    </alternativeName>
</protein>
<keyword id="KW-0665">Pyrimidine biosynthesis</keyword>
<keyword id="KW-1185">Reference proteome</keyword>
<keyword id="KW-0808">Transferase</keyword>
<organism>
    <name type="scientific">Methylibium petroleiphilum (strain ATCC BAA-1232 / LMG 22953 / PM1)</name>
    <dbReference type="NCBI Taxonomy" id="420662"/>
    <lineage>
        <taxon>Bacteria</taxon>
        <taxon>Pseudomonadati</taxon>
        <taxon>Pseudomonadota</taxon>
        <taxon>Betaproteobacteria</taxon>
        <taxon>Burkholderiales</taxon>
        <taxon>Sphaerotilaceae</taxon>
        <taxon>Methylibium</taxon>
    </lineage>
</organism>
<feature type="chain" id="PRO_0000321119" description="Aspartate carbamoyltransferase catalytic subunit">
    <location>
        <begin position="1"/>
        <end position="320"/>
    </location>
</feature>
<feature type="binding site" evidence="1">
    <location>
        <position position="68"/>
    </location>
    <ligand>
        <name>carbamoyl phosphate</name>
        <dbReference type="ChEBI" id="CHEBI:58228"/>
    </ligand>
</feature>
<feature type="binding site" evidence="1">
    <location>
        <position position="69"/>
    </location>
    <ligand>
        <name>carbamoyl phosphate</name>
        <dbReference type="ChEBI" id="CHEBI:58228"/>
    </ligand>
</feature>
<feature type="binding site" evidence="1">
    <location>
        <position position="96"/>
    </location>
    <ligand>
        <name>L-aspartate</name>
        <dbReference type="ChEBI" id="CHEBI:29991"/>
    </ligand>
</feature>
<feature type="binding site" evidence="1">
    <location>
        <position position="118"/>
    </location>
    <ligand>
        <name>carbamoyl phosphate</name>
        <dbReference type="ChEBI" id="CHEBI:58228"/>
    </ligand>
</feature>
<feature type="binding site" evidence="1">
    <location>
        <position position="148"/>
    </location>
    <ligand>
        <name>carbamoyl phosphate</name>
        <dbReference type="ChEBI" id="CHEBI:58228"/>
    </ligand>
</feature>
<feature type="binding site" evidence="1">
    <location>
        <position position="151"/>
    </location>
    <ligand>
        <name>carbamoyl phosphate</name>
        <dbReference type="ChEBI" id="CHEBI:58228"/>
    </ligand>
</feature>
<feature type="binding site" evidence="1">
    <location>
        <position position="181"/>
    </location>
    <ligand>
        <name>L-aspartate</name>
        <dbReference type="ChEBI" id="CHEBI:29991"/>
    </ligand>
</feature>
<feature type="binding site" evidence="1">
    <location>
        <position position="236"/>
    </location>
    <ligand>
        <name>L-aspartate</name>
        <dbReference type="ChEBI" id="CHEBI:29991"/>
    </ligand>
</feature>
<feature type="binding site" evidence="1">
    <location>
        <position position="277"/>
    </location>
    <ligand>
        <name>carbamoyl phosphate</name>
        <dbReference type="ChEBI" id="CHEBI:58228"/>
    </ligand>
</feature>
<feature type="binding site" evidence="1">
    <location>
        <position position="278"/>
    </location>
    <ligand>
        <name>carbamoyl phosphate</name>
        <dbReference type="ChEBI" id="CHEBI:58228"/>
    </ligand>
</feature>